<feature type="signal peptide" evidence="2">
    <location>
        <begin position="1"/>
        <end position="25"/>
    </location>
</feature>
<feature type="chain" id="PRO_0000008375" description="Ephrin-A4">
    <location>
        <begin position="26"/>
        <end position="175"/>
    </location>
</feature>
<feature type="propeptide" id="PRO_0000008376" description="Removed in mature form" evidence="2">
    <location>
        <begin position="176"/>
        <end position="206"/>
    </location>
</feature>
<feature type="domain" description="Ephrin RBD" evidence="3">
    <location>
        <begin position="26"/>
        <end position="158"/>
    </location>
</feature>
<feature type="region of interest" description="Disordered" evidence="4">
    <location>
        <begin position="161"/>
        <end position="180"/>
    </location>
</feature>
<feature type="short sequence motif" description="Cell attachment site" evidence="2">
    <location>
        <begin position="41"/>
        <end position="43"/>
    </location>
</feature>
<feature type="lipid moiety-binding region" description="GPI-anchor amidated serine" evidence="2">
    <location>
        <position position="175"/>
    </location>
</feature>
<feature type="glycosylation site" description="N-linked (GlcNAc...) asparagine" evidence="2">
    <location>
        <position position="33"/>
    </location>
</feature>
<feature type="glycosylation site" description="N-linked (GlcNAc...) asparagine" evidence="2">
    <location>
        <position position="98"/>
    </location>
</feature>
<feature type="disulfide bond" evidence="3">
    <location>
        <begin position="58"/>
        <end position="99"/>
    </location>
</feature>
<feature type="disulfide bond" evidence="3">
    <location>
        <begin position="86"/>
        <end position="147"/>
    </location>
</feature>
<feature type="sequence conflict" description="In Ref. 1." evidence="6" ref="1">
    <original>MRLL</original>
    <variation>MLLRLGLIYPPTRPPAPPGPLV</variation>
    <location>
        <begin position="1"/>
        <end position="4"/>
    </location>
</feature>
<keyword id="KW-1003">Cell membrane</keyword>
<keyword id="KW-1015">Disulfide bond</keyword>
<keyword id="KW-0325">Glycoprotein</keyword>
<keyword id="KW-0336">GPI-anchor</keyword>
<keyword id="KW-0449">Lipoprotein</keyword>
<keyword id="KW-0472">Membrane</keyword>
<keyword id="KW-1185">Reference proteome</keyword>
<keyword id="KW-0732">Signal</keyword>
<protein>
    <recommendedName>
        <fullName>Ephrin-A4</fullName>
    </recommendedName>
    <alternativeName>
        <fullName>EPH-related receptor tyrosine kinase ligand 4</fullName>
        <shortName>LERK-4</shortName>
    </alternativeName>
</protein>
<proteinExistence type="evidence at transcript level"/>
<comment type="function">
    <text evidence="1">Cell surface GPI-bound ligand for Eph receptors, a family of receptor tyrosine kinases which are crucial for migration, repulsion and adhesion during neuronal, vascular and epithelial development. Binds promiscuously Eph receptors residing on adjacent cells, leading to contact-dependent bidirectional signaling into neighboring cells. May play a role in the interaction between activated B-lymphocytes and dendritic cells in tonsils (By similarity).</text>
</comment>
<comment type="subcellular location">
    <subcellularLocation>
        <location evidence="1">Cell membrane</location>
        <topology evidence="1">Lipid-anchor</topology>
        <topology evidence="1">GPI-anchor</topology>
    </subcellularLocation>
</comment>
<comment type="tissue specificity">
    <text evidence="5">Expressed in myogenic progenitor cells.</text>
</comment>
<comment type="developmental stage">
    <text evidence="5">In myogenic progenitor cells, highly expressed at 11.5 dpc and ceases its expression at the late fetal stage (17.5 dpc).</text>
</comment>
<comment type="similarity">
    <text evidence="3">Belongs to the ephrin family.</text>
</comment>
<name>EFNA4_MOUSE</name>
<reference key="1">
    <citation type="journal article" date="1996" name="Dev. Biol.">
        <title>Distinct and overlapping expression patterns of ligands for Eph-related receptor tyrosine kinases during mouse embryogenesis.</title>
        <authorList>
            <person name="Flenniken A.M."/>
            <person name="Gale N.W."/>
            <person name="Yancopoulos G.D."/>
            <person name="Wilkinson D.G."/>
        </authorList>
    </citation>
    <scope>NUCLEOTIDE SEQUENCE [MRNA]</scope>
</reference>
<reference key="2">
    <citation type="journal article" date="1998" name="Genomics">
        <title>Characterization of the genes for mouse LERK-3/Ephrin-A3 (Epl3), mouse LERK-4/Ephrin-A4 (Epl4), and human LERK-6/Ephrin-A2 (EPLG6): conservation of intron/exon structure.</title>
        <authorList>
            <person name="Cerretti D.P."/>
            <person name="Nelson N."/>
        </authorList>
    </citation>
    <scope>NUCLEOTIDE SEQUENCE [GENOMIC DNA]</scope>
    <source>
        <strain>129</strain>
    </source>
</reference>
<reference key="3">
    <citation type="journal article" date="2016" name="Front. Cell Dev. Biol.">
        <title>Gene expression profiling of muscle stem cells identifies novel regulators of postnatal myogenesis.</title>
        <authorList>
            <person name="Alonso-Martin S."/>
            <person name="Rochat A."/>
            <person name="Mademtzoglou D."/>
            <person name="Morais J."/>
            <person name="de Reynies A."/>
            <person name="Aurade F."/>
            <person name="Chang T.H."/>
            <person name="Zammit P.S."/>
            <person name="Relaix F."/>
        </authorList>
    </citation>
    <scope>DEVELOPMENTAL STAGE</scope>
    <scope>TISSUE SPECIFICITY</scope>
</reference>
<evidence type="ECO:0000250" key="1"/>
<evidence type="ECO:0000255" key="2"/>
<evidence type="ECO:0000255" key="3">
    <source>
        <dbReference type="PROSITE-ProRule" id="PRU00884"/>
    </source>
</evidence>
<evidence type="ECO:0000256" key="4">
    <source>
        <dbReference type="SAM" id="MobiDB-lite"/>
    </source>
</evidence>
<evidence type="ECO:0000269" key="5">
    <source>
    </source>
</evidence>
<evidence type="ECO:0000305" key="6"/>
<accession>O08542</accession>
<accession>O55218</accession>
<organism>
    <name type="scientific">Mus musculus</name>
    <name type="common">Mouse</name>
    <dbReference type="NCBI Taxonomy" id="10090"/>
    <lineage>
        <taxon>Eukaryota</taxon>
        <taxon>Metazoa</taxon>
        <taxon>Chordata</taxon>
        <taxon>Craniata</taxon>
        <taxon>Vertebrata</taxon>
        <taxon>Euteleostomi</taxon>
        <taxon>Mammalia</taxon>
        <taxon>Eutheria</taxon>
        <taxon>Euarchontoglires</taxon>
        <taxon>Glires</taxon>
        <taxon>Rodentia</taxon>
        <taxon>Myomorpha</taxon>
        <taxon>Muroidea</taxon>
        <taxon>Muridae</taxon>
        <taxon>Murinae</taxon>
        <taxon>Mus</taxon>
        <taxon>Mus</taxon>
    </lineage>
</organism>
<dbReference type="EMBL" id="U90663">
    <property type="protein sequence ID" value="AAB50238.1"/>
    <property type="molecule type" value="mRNA"/>
</dbReference>
<dbReference type="EMBL" id="U92890">
    <property type="protein sequence ID" value="AAC39962.1"/>
    <property type="molecule type" value="Genomic_DNA"/>
</dbReference>
<dbReference type="EMBL" id="U92889">
    <property type="protein sequence ID" value="AAC39962.1"/>
    <property type="status" value="JOINED"/>
    <property type="molecule type" value="Genomic_DNA"/>
</dbReference>
<dbReference type="CCDS" id="CCDS38489.1"/>
<dbReference type="RefSeq" id="NP_031936.2">
    <property type="nucleotide sequence ID" value="NM_007910.2"/>
</dbReference>
<dbReference type="SMR" id="O08542"/>
<dbReference type="FunCoup" id="O08542">
    <property type="interactions" value="1325"/>
</dbReference>
<dbReference type="IntAct" id="O08542">
    <property type="interactions" value="2"/>
</dbReference>
<dbReference type="MINT" id="O08542"/>
<dbReference type="STRING" id="10090.ENSMUSP00000029674"/>
<dbReference type="GlyConnect" id="2292">
    <property type="glycosylation" value="1 N-Linked glycan (1 site)"/>
</dbReference>
<dbReference type="GlyCosmos" id="O08542">
    <property type="glycosylation" value="2 sites, 1 glycan"/>
</dbReference>
<dbReference type="GlyGen" id="O08542">
    <property type="glycosylation" value="2 sites, 2 N-linked glycans (1 site)"/>
</dbReference>
<dbReference type="iPTMnet" id="O08542"/>
<dbReference type="PhosphoSitePlus" id="O08542"/>
<dbReference type="PaxDb" id="10090-ENSMUSP00000029674"/>
<dbReference type="ProteomicsDB" id="277768"/>
<dbReference type="Antibodypedia" id="34875">
    <property type="antibodies" value="289 antibodies from 29 providers"/>
</dbReference>
<dbReference type="DNASU" id="13639"/>
<dbReference type="Ensembl" id="ENSMUST00000029674.8">
    <property type="protein sequence ID" value="ENSMUSP00000029674.8"/>
    <property type="gene ID" value="ENSMUSG00000028040.8"/>
</dbReference>
<dbReference type="GeneID" id="13639"/>
<dbReference type="KEGG" id="mmu:13639"/>
<dbReference type="UCSC" id="uc008pys.1">
    <property type="organism name" value="mouse"/>
</dbReference>
<dbReference type="AGR" id="MGI:106643"/>
<dbReference type="CTD" id="1945"/>
<dbReference type="MGI" id="MGI:106643">
    <property type="gene designation" value="Efna4"/>
</dbReference>
<dbReference type="VEuPathDB" id="HostDB:ENSMUSG00000028040"/>
<dbReference type="eggNOG" id="KOG3858">
    <property type="taxonomic scope" value="Eukaryota"/>
</dbReference>
<dbReference type="GeneTree" id="ENSGT00940000162071"/>
<dbReference type="HOGENOM" id="CLU_081598_3_0_1"/>
<dbReference type="InParanoid" id="O08542"/>
<dbReference type="OMA" id="LRHSVYW"/>
<dbReference type="OrthoDB" id="6250301at2759"/>
<dbReference type="PhylomeDB" id="O08542"/>
<dbReference type="Reactome" id="R-MMU-2682334">
    <property type="pathway name" value="EPH-Ephrin signaling"/>
</dbReference>
<dbReference type="Reactome" id="R-MMU-3928663">
    <property type="pathway name" value="EPHA-mediated growth cone collapse"/>
</dbReference>
<dbReference type="Reactome" id="R-MMU-3928665">
    <property type="pathway name" value="EPH-ephrin mediated repulsion of cells"/>
</dbReference>
<dbReference type="BioGRID-ORCS" id="13639">
    <property type="hits" value="2 hits in 79 CRISPR screens"/>
</dbReference>
<dbReference type="ChiTaRS" id="Efna4">
    <property type="organism name" value="mouse"/>
</dbReference>
<dbReference type="PRO" id="PR:O08542"/>
<dbReference type="Proteomes" id="UP000000589">
    <property type="component" value="Chromosome 3"/>
</dbReference>
<dbReference type="RNAct" id="O08542">
    <property type="molecule type" value="protein"/>
</dbReference>
<dbReference type="Bgee" id="ENSMUSG00000028040">
    <property type="expression patterns" value="Expressed in maxillary prominence and 123 other cell types or tissues"/>
</dbReference>
<dbReference type="ExpressionAtlas" id="O08542">
    <property type="expression patterns" value="baseline and differential"/>
</dbReference>
<dbReference type="GO" id="GO:0005886">
    <property type="term" value="C:plasma membrane"/>
    <property type="evidence" value="ECO:0007669"/>
    <property type="project" value="UniProtKB-SubCell"/>
</dbReference>
<dbReference type="GO" id="GO:0098552">
    <property type="term" value="C:side of membrane"/>
    <property type="evidence" value="ECO:0007669"/>
    <property type="project" value="UniProtKB-KW"/>
</dbReference>
<dbReference type="GO" id="GO:0046875">
    <property type="term" value="F:ephrin receptor binding"/>
    <property type="evidence" value="ECO:0007669"/>
    <property type="project" value="Ensembl"/>
</dbReference>
<dbReference type="GO" id="GO:0048013">
    <property type="term" value="P:ephrin receptor signaling pathway"/>
    <property type="evidence" value="ECO:0007669"/>
    <property type="project" value="InterPro"/>
</dbReference>
<dbReference type="CDD" id="cd10425">
    <property type="entry name" value="Ephrin-A_Ectodomain"/>
    <property type="match status" value="1"/>
</dbReference>
<dbReference type="FunFam" id="2.60.40.420:FF:000057">
    <property type="entry name" value="Ephrin A4"/>
    <property type="match status" value="1"/>
</dbReference>
<dbReference type="Gene3D" id="2.60.40.420">
    <property type="entry name" value="Cupredoxins - blue copper proteins"/>
    <property type="match status" value="1"/>
</dbReference>
<dbReference type="InterPro" id="IPR008972">
    <property type="entry name" value="Cupredoxin"/>
</dbReference>
<dbReference type="InterPro" id="IPR031328">
    <property type="entry name" value="Ephrin"/>
</dbReference>
<dbReference type="InterPro" id="IPR034252">
    <property type="entry name" value="Ephrin-A_Ecto"/>
</dbReference>
<dbReference type="InterPro" id="IPR019765">
    <property type="entry name" value="Ephrin_CS"/>
</dbReference>
<dbReference type="InterPro" id="IPR001799">
    <property type="entry name" value="Ephrin_RBD"/>
</dbReference>
<dbReference type="PANTHER" id="PTHR11304">
    <property type="entry name" value="EPHRIN"/>
    <property type="match status" value="1"/>
</dbReference>
<dbReference type="PANTHER" id="PTHR11304:SF42">
    <property type="entry name" value="EPHRIN-A4"/>
    <property type="match status" value="1"/>
</dbReference>
<dbReference type="Pfam" id="PF00812">
    <property type="entry name" value="Ephrin"/>
    <property type="match status" value="1"/>
</dbReference>
<dbReference type="PRINTS" id="PR01347">
    <property type="entry name" value="EPHRIN"/>
</dbReference>
<dbReference type="SUPFAM" id="SSF49503">
    <property type="entry name" value="Cupredoxins"/>
    <property type="match status" value="1"/>
</dbReference>
<dbReference type="PROSITE" id="PS01299">
    <property type="entry name" value="EPHRIN_RBD_1"/>
    <property type="match status" value="1"/>
</dbReference>
<dbReference type="PROSITE" id="PS51551">
    <property type="entry name" value="EPHRIN_RBD_2"/>
    <property type="match status" value="1"/>
</dbReference>
<sequence>MRLLPLLRTVLWAALLGSRLPGCSSLRHPIYWNSSNPRLLRGDAVVELGFNDYLDIFCPHYESPGPPEGPETFALYMVDWSGYEACTAEGANAFQRWNCSMPFAPFSPVRFSEKIQRYTPFPLGFEFLPGETYYYISVPTPESPGRCLRLQVSVCCKESGSSHESAHPVGSPGESGTSGWRGGHAPSPLCLLLLLLLPILRLLRVL</sequence>
<gene>
    <name type="primary">Efna4</name>
    <name type="synonym">Epl4</name>
    <name type="synonym">Eplg4</name>
    <name type="synonym">Lerk4</name>
</gene>